<reference key="1">
    <citation type="journal article" date="2010" name="J. Bacteriol.">
        <title>Complete genome sequence of Bacillus thuringiensis mutant strain BMB171.</title>
        <authorList>
            <person name="He J."/>
            <person name="Shao X."/>
            <person name="Zheng H."/>
            <person name="Li M."/>
            <person name="Wang J."/>
            <person name="Zhang Q."/>
            <person name="Li L."/>
            <person name="Liu Z."/>
            <person name="Sun M."/>
            <person name="Wang S."/>
            <person name="Yu Z."/>
        </authorList>
    </citation>
    <scope>NUCLEOTIDE SEQUENCE [LARGE SCALE GENOMIC DNA]</scope>
    <source>
        <strain>BMB171</strain>
    </source>
</reference>
<reference key="2">
    <citation type="journal article" date="2015" name="Front. Microbiol.">
        <title>Functional analysis of the sporulation-specific diadenylate cyclase CdaS in Bacillus thuringiensis.</title>
        <authorList>
            <person name="Zheng C."/>
            <person name="Ma Y."/>
            <person name="Wang X."/>
            <person name="Xie Y."/>
            <person name="Ali M.K."/>
            <person name="He J."/>
        </authorList>
    </citation>
    <scope>FUNCTION</scope>
    <scope>CATALYTIC ACTIVITY</scope>
    <scope>COFACTOR</scope>
    <scope>BIOPHYSICOCHEMICAL PROPERTIES</scope>
    <scope>SUBUNIT</scope>
    <scope>DEVELOPMENTAL STAGE</scope>
    <scope>INDUCTION</scope>
    <scope>DOMAIN</scope>
    <scope>DISRUPTION PHENOTYPE</scope>
    <scope>MUTAGENESIS OF TRP-4; 131-ASP-GLY-132 AND 163-ARG--ARG-165</scope>
    <source>
        <strain>BMB171</strain>
    </source>
</reference>
<accession>D5TM67</accession>
<proteinExistence type="evidence at protein level"/>
<dbReference type="EC" id="2.7.7.85" evidence="1 2"/>
<dbReference type="EMBL" id="CP001903">
    <property type="protein sequence ID" value="ADH09343.1"/>
    <property type="molecule type" value="Genomic_DNA"/>
</dbReference>
<dbReference type="RefSeq" id="WP_000545252.1">
    <property type="nucleotide sequence ID" value="NC_014171.1"/>
</dbReference>
<dbReference type="SMR" id="D5TM67"/>
<dbReference type="KEGG" id="btb:BMB171_C4535"/>
<dbReference type="HOGENOM" id="CLU_116655_0_0_9"/>
<dbReference type="BRENDA" id="2.7.7.85">
    <property type="organism ID" value="711"/>
</dbReference>
<dbReference type="GO" id="GO:0004016">
    <property type="term" value="F:adenylate cyclase activity"/>
    <property type="evidence" value="ECO:0000314"/>
    <property type="project" value="UniProtKB"/>
</dbReference>
<dbReference type="GO" id="GO:0005524">
    <property type="term" value="F:ATP binding"/>
    <property type="evidence" value="ECO:0007669"/>
    <property type="project" value="UniProtKB-UniRule"/>
</dbReference>
<dbReference type="GO" id="GO:0106408">
    <property type="term" value="F:diadenylate cyclase activity"/>
    <property type="evidence" value="ECO:0007669"/>
    <property type="project" value="UniProtKB-EC"/>
</dbReference>
<dbReference type="GO" id="GO:0006171">
    <property type="term" value="P:cAMP biosynthetic process"/>
    <property type="evidence" value="ECO:0007669"/>
    <property type="project" value="InterPro"/>
</dbReference>
<dbReference type="GO" id="GO:0030435">
    <property type="term" value="P:sporulation resulting in formation of a cellular spore"/>
    <property type="evidence" value="ECO:0007669"/>
    <property type="project" value="UniProtKB-KW"/>
</dbReference>
<dbReference type="FunFam" id="1.10.287.770:FF:000007">
    <property type="entry name" value="Diadenylate cyclase"/>
    <property type="match status" value="1"/>
</dbReference>
<dbReference type="FunFam" id="3.40.1700.10:FF:000003">
    <property type="entry name" value="Diadenylate cyclase"/>
    <property type="match status" value="1"/>
</dbReference>
<dbReference type="Gene3D" id="3.40.1700.10">
    <property type="entry name" value="DNA integrity scanning protein, DisA, N-terminal domain"/>
    <property type="match status" value="1"/>
</dbReference>
<dbReference type="Gene3D" id="1.10.287.770">
    <property type="entry name" value="YojJ-like"/>
    <property type="match status" value="1"/>
</dbReference>
<dbReference type="HAMAP" id="MF_00838">
    <property type="entry name" value="DacB"/>
    <property type="match status" value="1"/>
</dbReference>
<dbReference type="InterPro" id="IPR014046">
    <property type="entry name" value="C-di-AMP_synthase"/>
</dbReference>
<dbReference type="InterPro" id="IPR034693">
    <property type="entry name" value="CdaS"/>
</dbReference>
<dbReference type="InterPro" id="IPR019457">
    <property type="entry name" value="CdaS_N"/>
</dbReference>
<dbReference type="InterPro" id="IPR053472">
    <property type="entry name" value="DAC_CdaS-like"/>
</dbReference>
<dbReference type="InterPro" id="IPR050338">
    <property type="entry name" value="DisA"/>
</dbReference>
<dbReference type="InterPro" id="IPR036888">
    <property type="entry name" value="DNA_integrity_DisA_N_sf"/>
</dbReference>
<dbReference type="InterPro" id="IPR003390">
    <property type="entry name" value="DNA_integrity_scan_DisA_N"/>
</dbReference>
<dbReference type="NCBIfam" id="NF038328">
    <property type="entry name" value="c-di-AMP_CdaS"/>
    <property type="match status" value="1"/>
</dbReference>
<dbReference type="PANTHER" id="PTHR34185:SF2">
    <property type="entry name" value="CYCLIC DI-AMP SYNTHASE CDAS"/>
    <property type="match status" value="1"/>
</dbReference>
<dbReference type="PANTHER" id="PTHR34185">
    <property type="entry name" value="DIADENYLATE CYCLASE"/>
    <property type="match status" value="1"/>
</dbReference>
<dbReference type="Pfam" id="PF10372">
    <property type="entry name" value="CdaS_N"/>
    <property type="match status" value="1"/>
</dbReference>
<dbReference type="Pfam" id="PF02457">
    <property type="entry name" value="DAC"/>
    <property type="match status" value="1"/>
</dbReference>
<dbReference type="PIRSF" id="PIRSF004793">
    <property type="entry name" value="UCP004793"/>
    <property type="match status" value="1"/>
</dbReference>
<dbReference type="SUPFAM" id="SSF143597">
    <property type="entry name" value="YojJ-like"/>
    <property type="match status" value="1"/>
</dbReference>
<dbReference type="PROSITE" id="PS51794">
    <property type="entry name" value="DAC"/>
    <property type="match status" value="1"/>
</dbReference>
<evidence type="ECO:0000255" key="1">
    <source>
        <dbReference type="HAMAP-Rule" id="MF_00838"/>
    </source>
</evidence>
<evidence type="ECO:0000269" key="2">
    <source>
    </source>
</evidence>
<evidence type="ECO:0000303" key="3">
    <source>
    </source>
</evidence>
<evidence type="ECO:0000305" key="4"/>
<evidence type="ECO:0000305" key="5">
    <source>
    </source>
</evidence>
<comment type="function">
    <text evidence="2">One of 3 paralogous diadenylate cyclases (DAC) in this bacteria catalyzing the condensation of 2 ATP molecules into cyclic di-AMP (c-di-AMP). It has slow DAC activity with ADP as a substrate and may have weak ADPase activity (PubMed:26441857). Required for efficient spore formation, whereas in B.subtilis, it is required for efficient spore germination. It is produced under the control of different sigma factors in the two bacteria. It is also required for parasporal crystal formation (PubMed:26441857).</text>
</comment>
<comment type="catalytic activity">
    <reaction evidence="1 2">
        <text>2 ATP = 3',3'-c-di-AMP + 2 diphosphate</text>
        <dbReference type="Rhea" id="RHEA:35655"/>
        <dbReference type="ChEBI" id="CHEBI:30616"/>
        <dbReference type="ChEBI" id="CHEBI:33019"/>
        <dbReference type="ChEBI" id="CHEBI:71500"/>
        <dbReference type="EC" id="2.7.7.85"/>
    </reaction>
</comment>
<comment type="cofactor">
    <cofactor evidence="2">
        <name>Mg(2+)</name>
        <dbReference type="ChEBI" id="CHEBI:18420"/>
    </cofactor>
</comment>
<comment type="biophysicochemical properties">
    <phDependence>
        <text evidence="2">Optimum pH is 7.5.</text>
    </phDependence>
</comment>
<comment type="subunit">
    <text evidence="5">Probably forms a homohexamer (PubMed:26441857).</text>
</comment>
<comment type="developmental stage">
    <text evidence="5">Probably expressed only during sporulation.</text>
</comment>
<comment type="induction">
    <text evidence="2">First expressed at onset of sporulation, maximal transcription at 18 hours during sporulation in mid-stationary phase. Under control of sigma-H factor; in B.subtilis is under control of the sigma-G factor.</text>
</comment>
<comment type="domain">
    <text evidence="2">The N-terminal region (residues 1-69) is required for activity, unlike the B.subtilis ortholog where their removal increases c-di-AMP production.</text>
</comment>
<comment type="disruption phenotype">
    <text evidence="2">Spore formation delayed by about 2 hours, about 20-fold decrease in spore formation; 2-fold decrease in parasporal crystal formation, 30% decreased c-di-AMP levels at 18 hours growth. Double cdaS-disA and cdaS-cdaA mutants are viable, but neither double cdaA-disA nor triple cdaA-cdaS-disA mutants can be made, suggesting c-di-AMP is essential.</text>
</comment>
<comment type="miscellaneous">
    <text evidence="4">This strain no longer produces parasporal crystals, but can be made to do so upon transformation with appropriate plasmids.</text>
</comment>
<comment type="similarity">
    <text evidence="1">Belongs to the adenylate cyclase family. DacB/CdaS subfamily.</text>
</comment>
<keyword id="KW-0067">ATP-binding</keyword>
<keyword id="KW-0547">Nucleotide-binding</keyword>
<keyword id="KW-0548">Nucleotidyltransferase</keyword>
<keyword id="KW-0749">Sporulation</keyword>
<keyword id="KW-0808">Transferase</keyword>
<name>CDAS_BACT1</name>
<sequence length="201" mass="22207">MHEWGLSEELKIQTKQMIEIAEKELSIMRNAIDKEDECILCKMEDIHHMLANVQTLAATYYIQAYLSPYTESSSFITTAIQHLSARKHGALIVVERNETLEALIQTGTTLNAHLTAPLLESIFYPGNPLHDGAVLVKNNHIVSAANILPLTKSTEVDPELGTRHRAAIGLSEKSDALILVVSEETGRTSFALNGILYTISL</sequence>
<organism>
    <name type="scientific">Bacillus thuringiensis (strain BMB171)</name>
    <dbReference type="NCBI Taxonomy" id="714359"/>
    <lineage>
        <taxon>Bacteria</taxon>
        <taxon>Bacillati</taxon>
        <taxon>Bacillota</taxon>
        <taxon>Bacilli</taxon>
        <taxon>Bacillales</taxon>
        <taxon>Bacillaceae</taxon>
        <taxon>Bacillus</taxon>
        <taxon>Bacillus cereus group</taxon>
    </lineage>
</organism>
<gene>
    <name evidence="3" type="primary">cdaS</name>
    <name type="synonym">dacB</name>
    <name type="ordered locus">BMB171_C4535</name>
</gene>
<feature type="chain" id="PRO_0000436101" description="Diadenylate cyclase CdaS">
    <location>
        <begin position="1"/>
        <end position="201"/>
    </location>
</feature>
<feature type="domain" description="DAC" evidence="1">
    <location>
        <begin position="54"/>
        <end position="201"/>
    </location>
</feature>
<feature type="mutagenesis site" description="Decrease in c-di-AMP synthesis." evidence="2">
    <original>W</original>
    <variation>A</variation>
    <variation>D</variation>
    <location>
        <position position="4"/>
    </location>
</feature>
<feature type="mutagenesis site" description="Slight decrease in c-di-AMP synthesis." evidence="2">
    <original>W</original>
    <variation>G</variation>
    <location>
        <position position="4"/>
    </location>
</feature>
<feature type="mutagenesis site" description="Nearly complete loss of c-di-AMP synthesis." evidence="2">
    <original>W</original>
    <variation>K</variation>
    <location>
        <position position="4"/>
    </location>
</feature>
<feature type="mutagenesis site" description="Loss of c-di-AMP synthesis." evidence="2">
    <original>DG</original>
    <variation>AA</variation>
    <location>
        <begin position="131"/>
        <end position="132"/>
    </location>
</feature>
<feature type="mutagenesis site" description="Loss of c-di-AMP synthesis." evidence="2">
    <original>RHR</original>
    <variation>AAA</variation>
    <location>
        <begin position="163"/>
        <end position="165"/>
    </location>
</feature>
<protein>
    <recommendedName>
        <fullName evidence="3">Diadenylate cyclase CdaS</fullName>
        <shortName evidence="1">DAC</shortName>
        <ecNumber evidence="1 2">2.7.7.85</ecNumber>
    </recommendedName>
    <alternativeName>
        <fullName evidence="1">Cyclic-di-AMP synthase</fullName>
        <shortName evidence="1">c-di-AMP synthase</shortName>
    </alternativeName>
</protein>